<organism>
    <name type="scientific">Leishmania infantum</name>
    <dbReference type="NCBI Taxonomy" id="5671"/>
    <lineage>
        <taxon>Eukaryota</taxon>
        <taxon>Discoba</taxon>
        <taxon>Euglenozoa</taxon>
        <taxon>Kinetoplastea</taxon>
        <taxon>Metakinetoplastina</taxon>
        <taxon>Trypanosomatida</taxon>
        <taxon>Trypanosomatidae</taxon>
        <taxon>Leishmaniinae</taxon>
        <taxon>Leishmania</taxon>
    </lineage>
</organism>
<proteinExistence type="evidence at transcript level"/>
<feature type="chain" id="PRO_0000157657" description="Large ribosomal subunit protein P2">
    <location>
        <begin position="1"/>
        <end position="106"/>
    </location>
</feature>
<feature type="region of interest" description="Disordered" evidence="2">
    <location>
        <begin position="79"/>
        <end position="106"/>
    </location>
</feature>
<feature type="compositionally biased region" description="Acidic residues" evidence="2">
    <location>
        <begin position="91"/>
        <end position="100"/>
    </location>
</feature>
<sequence>MQYLAAYALVALSGKTPSKADVQAVLKAAGVAVDASRVDAVFQEVEGKSFDALVAEGRTKLVGSGSAAPAGAVSTAGAGAGAVAEAKKEEPEEEEADDDMGFGLFD</sequence>
<gene>
    <name type="primary">LIP</name>
</gene>
<dbReference type="EMBL" id="X68015">
    <property type="protein sequence ID" value="CAA48152.1"/>
    <property type="molecule type" value="Genomic_DNA"/>
</dbReference>
<dbReference type="EMBL" id="X68015">
    <property type="protein sequence ID" value="CAA48151.1"/>
    <property type="molecule type" value="Genomic_DNA"/>
</dbReference>
<dbReference type="VEuPathDB" id="TriTrypDB:LINF_300043100"/>
<dbReference type="GO" id="GO:0022625">
    <property type="term" value="C:cytosolic large ribosomal subunit"/>
    <property type="evidence" value="ECO:0007669"/>
    <property type="project" value="InterPro"/>
</dbReference>
<dbReference type="GO" id="GO:0003735">
    <property type="term" value="F:structural constituent of ribosome"/>
    <property type="evidence" value="ECO:0007669"/>
    <property type="project" value="InterPro"/>
</dbReference>
<dbReference type="GO" id="GO:0002182">
    <property type="term" value="P:cytoplasmic translational elongation"/>
    <property type="evidence" value="ECO:0007669"/>
    <property type="project" value="InterPro"/>
</dbReference>
<dbReference type="CDD" id="cd05833">
    <property type="entry name" value="Ribosomal_P2"/>
    <property type="match status" value="1"/>
</dbReference>
<dbReference type="FunFam" id="1.10.10.1410:FF:000002">
    <property type="entry name" value="60S acidic ribosomal protein P2"/>
    <property type="match status" value="1"/>
</dbReference>
<dbReference type="Gene3D" id="1.10.10.1410">
    <property type="match status" value="1"/>
</dbReference>
<dbReference type="HAMAP" id="MF_01478">
    <property type="entry name" value="Ribosomal_L12_arch"/>
    <property type="match status" value="1"/>
</dbReference>
<dbReference type="InterPro" id="IPR038716">
    <property type="entry name" value="P1/P2_N_sf"/>
</dbReference>
<dbReference type="InterPro" id="IPR027534">
    <property type="entry name" value="Ribosomal_P1/P2"/>
</dbReference>
<dbReference type="InterPro" id="IPR001859">
    <property type="entry name" value="Ribosomal_P1/P2_euk"/>
</dbReference>
<dbReference type="InterPro" id="IPR044076">
    <property type="entry name" value="Ribosomal_P2"/>
</dbReference>
<dbReference type="PANTHER" id="PTHR21141">
    <property type="entry name" value="60S ACIDIC RIBOSOMAL PROTEIN FAMILY MEMBER"/>
    <property type="match status" value="1"/>
</dbReference>
<dbReference type="PANTHER" id="PTHR21141:SF58">
    <property type="entry name" value="ACIDIC RIBOSOMAL PROTEIN P2, PUTATIVE-RELATED"/>
    <property type="match status" value="1"/>
</dbReference>
<dbReference type="Pfam" id="PF00428">
    <property type="entry name" value="Ribosomal_60s"/>
    <property type="match status" value="1"/>
</dbReference>
<dbReference type="PRINTS" id="PR00456">
    <property type="entry name" value="RIBOSOMALP2"/>
</dbReference>
<reference key="1">
    <citation type="journal article" date="1993" name="J. Biol. Chem.">
        <title>Genomic organization and expression of two independent gene arrays coding for two antigenic acidic ribosomal proteins of Leishmania.</title>
        <authorList>
            <person name="Soto M."/>
            <person name="Requena J.M."/>
            <person name="Garcia M."/>
            <person name="Gomez L.C."/>
            <person name="Navarrete I."/>
            <person name="Alonso C."/>
        </authorList>
    </citation>
    <scope>NUCLEOTIDE SEQUENCE [GENOMIC DNA]</scope>
    <source>
        <strain>MHOM/FR/78/LEM 75</strain>
    </source>
</reference>
<comment type="function">
    <text>Plays an important role in the elongation step of protein synthesis.</text>
</comment>
<comment type="subunit">
    <text>P1 and P2 exist as dimers at the large ribosomal subunit.</text>
</comment>
<comment type="developmental stage">
    <text>High levels are present in the logarithmic growth phase of the promastigote stage.</text>
</comment>
<comment type="PTM">
    <text evidence="1">Phosphorylated.</text>
</comment>
<comment type="similarity">
    <text evidence="3">Belongs to the eukaryotic ribosomal protein P1/P2 family.</text>
</comment>
<accession>Q06383</accession>
<evidence type="ECO:0000250" key="1"/>
<evidence type="ECO:0000256" key="2">
    <source>
        <dbReference type="SAM" id="MobiDB-lite"/>
    </source>
</evidence>
<evidence type="ECO:0000305" key="3"/>
<name>RLA2_LEIIN</name>
<keyword id="KW-0597">Phosphoprotein</keyword>
<keyword id="KW-0687">Ribonucleoprotein</keyword>
<keyword id="KW-0689">Ribosomal protein</keyword>
<protein>
    <recommendedName>
        <fullName evidence="3">Large ribosomal subunit protein P2</fullName>
    </recommendedName>
    <alternativeName>
        <fullName>60S acidic ribosomal protein P2-1</fullName>
    </alternativeName>
</protein>